<feature type="chain" id="PRO_1000071429" description="Tryptophan synthase beta chain">
    <location>
        <begin position="1"/>
        <end position="404"/>
    </location>
</feature>
<feature type="modified residue" description="N6-(pyridoxal phosphate)lysine" evidence="1">
    <location>
        <position position="94"/>
    </location>
</feature>
<accession>A6QGS4</accession>
<protein>
    <recommendedName>
        <fullName evidence="1">Tryptophan synthase beta chain</fullName>
        <ecNumber evidence="1">4.2.1.20</ecNumber>
    </recommendedName>
</protein>
<gene>
    <name evidence="1" type="primary">trpB</name>
    <name type="ordered locus">NWMN_1284</name>
</gene>
<comment type="function">
    <text evidence="1">The beta subunit is responsible for the synthesis of L-tryptophan from indole and L-serine.</text>
</comment>
<comment type="catalytic activity">
    <reaction evidence="1">
        <text>(1S,2R)-1-C-(indol-3-yl)glycerol 3-phosphate + L-serine = D-glyceraldehyde 3-phosphate + L-tryptophan + H2O</text>
        <dbReference type="Rhea" id="RHEA:10532"/>
        <dbReference type="ChEBI" id="CHEBI:15377"/>
        <dbReference type="ChEBI" id="CHEBI:33384"/>
        <dbReference type="ChEBI" id="CHEBI:57912"/>
        <dbReference type="ChEBI" id="CHEBI:58866"/>
        <dbReference type="ChEBI" id="CHEBI:59776"/>
        <dbReference type="EC" id="4.2.1.20"/>
    </reaction>
</comment>
<comment type="cofactor">
    <cofactor evidence="1">
        <name>pyridoxal 5'-phosphate</name>
        <dbReference type="ChEBI" id="CHEBI:597326"/>
    </cofactor>
</comment>
<comment type="pathway">
    <text evidence="1">Amino-acid biosynthesis; L-tryptophan biosynthesis; L-tryptophan from chorismate: step 5/5.</text>
</comment>
<comment type="subunit">
    <text evidence="1">Tetramer of two alpha and two beta chains.</text>
</comment>
<comment type="similarity">
    <text evidence="1">Belongs to the TrpB family.</text>
</comment>
<proteinExistence type="inferred from homology"/>
<keyword id="KW-0028">Amino-acid biosynthesis</keyword>
<keyword id="KW-0057">Aromatic amino acid biosynthesis</keyword>
<keyword id="KW-0456">Lyase</keyword>
<keyword id="KW-0663">Pyridoxal phosphate</keyword>
<keyword id="KW-0822">Tryptophan biosynthesis</keyword>
<organism>
    <name type="scientific">Staphylococcus aureus (strain Newman)</name>
    <dbReference type="NCBI Taxonomy" id="426430"/>
    <lineage>
        <taxon>Bacteria</taxon>
        <taxon>Bacillati</taxon>
        <taxon>Bacillota</taxon>
        <taxon>Bacilli</taxon>
        <taxon>Bacillales</taxon>
        <taxon>Staphylococcaceae</taxon>
        <taxon>Staphylococcus</taxon>
    </lineage>
</organism>
<dbReference type="EC" id="4.2.1.20" evidence="1"/>
<dbReference type="EMBL" id="AP009351">
    <property type="protein sequence ID" value="BAF67556.1"/>
    <property type="molecule type" value="Genomic_DNA"/>
</dbReference>
<dbReference type="RefSeq" id="WP_001041337.1">
    <property type="nucleotide sequence ID" value="NZ_JBBIAE010000001.1"/>
</dbReference>
<dbReference type="SMR" id="A6QGS4"/>
<dbReference type="KEGG" id="sae:NWMN_1284"/>
<dbReference type="HOGENOM" id="CLU_016734_3_1_9"/>
<dbReference type="UniPathway" id="UPA00035">
    <property type="reaction ID" value="UER00044"/>
</dbReference>
<dbReference type="Proteomes" id="UP000006386">
    <property type="component" value="Chromosome"/>
</dbReference>
<dbReference type="GO" id="GO:0005737">
    <property type="term" value="C:cytoplasm"/>
    <property type="evidence" value="ECO:0007669"/>
    <property type="project" value="TreeGrafter"/>
</dbReference>
<dbReference type="GO" id="GO:0004834">
    <property type="term" value="F:tryptophan synthase activity"/>
    <property type="evidence" value="ECO:0007669"/>
    <property type="project" value="UniProtKB-UniRule"/>
</dbReference>
<dbReference type="CDD" id="cd06446">
    <property type="entry name" value="Trp-synth_B"/>
    <property type="match status" value="1"/>
</dbReference>
<dbReference type="FunFam" id="3.40.50.1100:FF:000001">
    <property type="entry name" value="Tryptophan synthase beta chain"/>
    <property type="match status" value="1"/>
</dbReference>
<dbReference type="FunFam" id="3.40.50.1100:FF:000004">
    <property type="entry name" value="Tryptophan synthase beta chain"/>
    <property type="match status" value="1"/>
</dbReference>
<dbReference type="Gene3D" id="3.40.50.1100">
    <property type="match status" value="2"/>
</dbReference>
<dbReference type="HAMAP" id="MF_00133">
    <property type="entry name" value="Trp_synth_beta"/>
    <property type="match status" value="1"/>
</dbReference>
<dbReference type="InterPro" id="IPR006653">
    <property type="entry name" value="Trp_synth_b_CS"/>
</dbReference>
<dbReference type="InterPro" id="IPR006654">
    <property type="entry name" value="Trp_synth_beta"/>
</dbReference>
<dbReference type="InterPro" id="IPR023026">
    <property type="entry name" value="Trp_synth_beta/beta-like"/>
</dbReference>
<dbReference type="InterPro" id="IPR001926">
    <property type="entry name" value="TrpB-like_PALP"/>
</dbReference>
<dbReference type="InterPro" id="IPR036052">
    <property type="entry name" value="TrpB-like_PALP_sf"/>
</dbReference>
<dbReference type="NCBIfam" id="TIGR00263">
    <property type="entry name" value="trpB"/>
    <property type="match status" value="1"/>
</dbReference>
<dbReference type="PANTHER" id="PTHR48077:SF3">
    <property type="entry name" value="TRYPTOPHAN SYNTHASE"/>
    <property type="match status" value="1"/>
</dbReference>
<dbReference type="PANTHER" id="PTHR48077">
    <property type="entry name" value="TRYPTOPHAN SYNTHASE-RELATED"/>
    <property type="match status" value="1"/>
</dbReference>
<dbReference type="Pfam" id="PF00291">
    <property type="entry name" value="PALP"/>
    <property type="match status" value="1"/>
</dbReference>
<dbReference type="PIRSF" id="PIRSF001413">
    <property type="entry name" value="Trp_syn_beta"/>
    <property type="match status" value="1"/>
</dbReference>
<dbReference type="SUPFAM" id="SSF53686">
    <property type="entry name" value="Tryptophan synthase beta subunit-like PLP-dependent enzymes"/>
    <property type="match status" value="1"/>
</dbReference>
<dbReference type="PROSITE" id="PS00168">
    <property type="entry name" value="TRP_SYNTHASE_BETA"/>
    <property type="match status" value="1"/>
</dbReference>
<name>TRPB_STAAE</name>
<reference key="1">
    <citation type="journal article" date="2008" name="J. Bacteriol.">
        <title>Genome sequence of Staphylococcus aureus strain Newman and comparative analysis of staphylococcal genomes: polymorphism and evolution of two major pathogenicity islands.</title>
        <authorList>
            <person name="Baba T."/>
            <person name="Bae T."/>
            <person name="Schneewind O."/>
            <person name="Takeuchi F."/>
            <person name="Hiramatsu K."/>
        </authorList>
    </citation>
    <scope>NUCLEOTIDE SEQUENCE [LARGE SCALE GENOMIC DNA]</scope>
    <source>
        <strain>Newman</strain>
    </source>
</reference>
<evidence type="ECO:0000255" key="1">
    <source>
        <dbReference type="HAMAP-Rule" id="MF_00133"/>
    </source>
</evidence>
<sequence length="404" mass="43965">MNKQIQTEADELGFFGEYGGQYVPETLMPAIIELKKAYKEAKADPEFQRELEYYLSEYVGRATPLTYAASYTESLGGAKIYLKREDLNHTGAHKINNALGQALLAKRMGKKKLVAETGAGQHGVASATVAALFDMELVVFMGSEDIKRQQLNVFRMELLGAKVVAVEDGQGTLSDAVNKALQYWVSHVDDTHYLLGSALGPDPFPTIVRDFQSVIGKEIKSQILKKEGRLPDAIVACIGGGSNAIGTFYPFIKDDVALYGVEAAGQGDDTDKHALAIGKGSPGVLHGTKMYLIQDEDGQVQLAHSISAGLDYPGIGPEHSYYHDIGRVTFENASDTQAMNALINFTKHEGIIPAIESAHALSYVERLAPTMSKEDIIVVTISGRGDKDMETIRQYMVERGLAND</sequence>